<organism>
    <name type="scientific">Bacillus cytotoxicus (strain DSM 22905 / CIP 110041 / 391-98 / NVH 391-98)</name>
    <dbReference type="NCBI Taxonomy" id="315749"/>
    <lineage>
        <taxon>Bacteria</taxon>
        <taxon>Bacillati</taxon>
        <taxon>Bacillota</taxon>
        <taxon>Bacilli</taxon>
        <taxon>Bacillales</taxon>
        <taxon>Bacillaceae</taxon>
        <taxon>Bacillus</taxon>
        <taxon>Bacillus cereus group</taxon>
    </lineage>
</organism>
<keyword id="KW-0028">Amino-acid biosynthesis</keyword>
<keyword id="KW-0413">Isomerase</keyword>
<keyword id="KW-0486">Methionine biosynthesis</keyword>
<comment type="function">
    <text evidence="1">Catalyzes the interconversion of methylthioribose-1-phosphate (MTR-1-P) into methylthioribulose-1-phosphate (MTRu-1-P).</text>
</comment>
<comment type="catalytic activity">
    <reaction evidence="1">
        <text>5-(methylsulfanyl)-alpha-D-ribose 1-phosphate = 5-(methylsulfanyl)-D-ribulose 1-phosphate</text>
        <dbReference type="Rhea" id="RHEA:19989"/>
        <dbReference type="ChEBI" id="CHEBI:58533"/>
        <dbReference type="ChEBI" id="CHEBI:58548"/>
        <dbReference type="EC" id="5.3.1.23"/>
    </reaction>
</comment>
<comment type="pathway">
    <text evidence="1">Amino-acid biosynthesis; L-methionine biosynthesis via salvage pathway; L-methionine from S-methyl-5-thio-alpha-D-ribose 1-phosphate: step 1/6.</text>
</comment>
<comment type="subunit">
    <text>Homodimer.</text>
</comment>
<comment type="similarity">
    <text evidence="2">Belongs to the eIF-2B alpha/beta/delta subunits family. MtnA subfamily.</text>
</comment>
<accession>A7GS56</accession>
<proteinExistence type="inferred from homology"/>
<reference key="1">
    <citation type="journal article" date="2008" name="Chem. Biol. Interact.">
        <title>Extending the Bacillus cereus group genomics to putative food-borne pathogens of different toxicity.</title>
        <authorList>
            <person name="Lapidus A."/>
            <person name="Goltsman E."/>
            <person name="Auger S."/>
            <person name="Galleron N."/>
            <person name="Segurens B."/>
            <person name="Dossat C."/>
            <person name="Land M.L."/>
            <person name="Broussolle V."/>
            <person name="Brillard J."/>
            <person name="Guinebretiere M.-H."/>
            <person name="Sanchis V."/>
            <person name="Nguen-the C."/>
            <person name="Lereclus D."/>
            <person name="Richardson P."/>
            <person name="Wincker P."/>
            <person name="Weissenbach J."/>
            <person name="Ehrlich S.D."/>
            <person name="Sorokin A."/>
        </authorList>
    </citation>
    <scope>NUCLEOTIDE SEQUENCE [LARGE SCALE GENOMIC DNA]</scope>
    <source>
        <strain>DSM 22905 / CIP 110041 / 391-98 / NVH 391-98</strain>
    </source>
</reference>
<name>MTNA_BACCN</name>
<sequence length="349" mass="38442">MNTTVAVPRAIIWKGDSITILNQTKLPHVAEYKTLTSIEDVWKSIVMLEVRGAPAIGIAAAFGLALAAQKYEAINIVEFKTKFNRDCNYLGTSRPTAVNLFWAIDRMRAAIEEVSTIKIAREILEEEALQIQQEDEQVCRSLGEHALTCFQDGDRILTICNAGSIATARYGTALAPFYIGKEKGIHLHAYACETRPVLQGARLTTWELREAGVDVTLITDNMAAHTIRTKNISAIIVGADRIVANGDTANKVGTLNLAILAKHYQIPFYVAAPLSTFDTKKKTGNEIIIEERDETEVTKINGQQIAPAGIHIYNPAFDITPHEFISGIITEKGILQGDYTKEIASLFEK</sequence>
<feature type="chain" id="PRO_0000357148" description="Methylthioribose-1-phosphate isomerase">
    <location>
        <begin position="1"/>
        <end position="349"/>
    </location>
</feature>
<feature type="active site" description="Proton donor" evidence="1">
    <location>
        <position position="240"/>
    </location>
</feature>
<feature type="binding site" evidence="1">
    <location>
        <begin position="51"/>
        <end position="53"/>
    </location>
    <ligand>
        <name>substrate</name>
    </ligand>
</feature>
<feature type="binding site" evidence="1">
    <location>
        <position position="94"/>
    </location>
    <ligand>
        <name>substrate</name>
    </ligand>
</feature>
<feature type="binding site" evidence="1">
    <location>
        <position position="199"/>
    </location>
    <ligand>
        <name>substrate</name>
    </ligand>
</feature>
<feature type="binding site" evidence="1">
    <location>
        <begin position="250"/>
        <end position="251"/>
    </location>
    <ligand>
        <name>substrate</name>
    </ligand>
</feature>
<feature type="site" description="Transition state stabilizer" evidence="1">
    <location>
        <position position="160"/>
    </location>
</feature>
<evidence type="ECO:0000255" key="1">
    <source>
        <dbReference type="HAMAP-Rule" id="MF_01678"/>
    </source>
</evidence>
<evidence type="ECO:0000305" key="2"/>
<protein>
    <recommendedName>
        <fullName evidence="1">Methylthioribose-1-phosphate isomerase</fullName>
        <shortName evidence="1">M1Pi</shortName>
        <shortName evidence="1">MTR-1-P isomerase</shortName>
        <ecNumber evidence="1">5.3.1.23</ecNumber>
    </recommendedName>
    <alternativeName>
        <fullName evidence="1">S-methyl-5-thioribose-1-phosphate isomerase</fullName>
    </alternativeName>
</protein>
<gene>
    <name evidence="1" type="primary">mtnA</name>
    <name type="ordered locus">Bcer98_2731</name>
</gene>
<dbReference type="EC" id="5.3.1.23" evidence="1"/>
<dbReference type="EMBL" id="CP000764">
    <property type="protein sequence ID" value="ABS22964.1"/>
    <property type="molecule type" value="Genomic_DNA"/>
</dbReference>
<dbReference type="RefSeq" id="WP_012095189.1">
    <property type="nucleotide sequence ID" value="NC_009674.1"/>
</dbReference>
<dbReference type="SMR" id="A7GS56"/>
<dbReference type="STRING" id="315749.Bcer98_2731"/>
<dbReference type="GeneID" id="33897985"/>
<dbReference type="KEGG" id="bcy:Bcer98_2731"/>
<dbReference type="eggNOG" id="COG0182">
    <property type="taxonomic scope" value="Bacteria"/>
</dbReference>
<dbReference type="HOGENOM" id="CLU_016218_1_2_9"/>
<dbReference type="OrthoDB" id="9803436at2"/>
<dbReference type="UniPathway" id="UPA00904">
    <property type="reaction ID" value="UER00874"/>
</dbReference>
<dbReference type="Proteomes" id="UP000002300">
    <property type="component" value="Chromosome"/>
</dbReference>
<dbReference type="GO" id="GO:0046523">
    <property type="term" value="F:S-methyl-5-thioribose-1-phosphate isomerase activity"/>
    <property type="evidence" value="ECO:0007669"/>
    <property type="project" value="UniProtKB-UniRule"/>
</dbReference>
<dbReference type="GO" id="GO:0019509">
    <property type="term" value="P:L-methionine salvage from methylthioadenosine"/>
    <property type="evidence" value="ECO:0007669"/>
    <property type="project" value="UniProtKB-UniRule"/>
</dbReference>
<dbReference type="FunFam" id="1.20.120.420:FF:000003">
    <property type="entry name" value="Methylthioribose-1-phosphate isomerase"/>
    <property type="match status" value="1"/>
</dbReference>
<dbReference type="FunFam" id="3.40.50.10470:FF:000006">
    <property type="entry name" value="Methylthioribose-1-phosphate isomerase"/>
    <property type="match status" value="1"/>
</dbReference>
<dbReference type="Gene3D" id="1.20.120.420">
    <property type="entry name" value="translation initiation factor eif-2b, domain 1"/>
    <property type="match status" value="1"/>
</dbReference>
<dbReference type="Gene3D" id="3.40.50.10470">
    <property type="entry name" value="Translation initiation factor eif-2b, domain 2"/>
    <property type="match status" value="1"/>
</dbReference>
<dbReference type="HAMAP" id="MF_01678">
    <property type="entry name" value="Salvage_MtnA"/>
    <property type="match status" value="1"/>
</dbReference>
<dbReference type="InterPro" id="IPR000649">
    <property type="entry name" value="IF-2B-related"/>
</dbReference>
<dbReference type="InterPro" id="IPR005251">
    <property type="entry name" value="IF-M1Pi"/>
</dbReference>
<dbReference type="InterPro" id="IPR042529">
    <property type="entry name" value="IF_2B-like_C"/>
</dbReference>
<dbReference type="InterPro" id="IPR011559">
    <property type="entry name" value="Initiation_fac_2B_a/b/d"/>
</dbReference>
<dbReference type="InterPro" id="IPR027363">
    <property type="entry name" value="M1Pi_N"/>
</dbReference>
<dbReference type="InterPro" id="IPR037171">
    <property type="entry name" value="NagB/RpiA_transferase-like"/>
</dbReference>
<dbReference type="NCBIfam" id="TIGR00524">
    <property type="entry name" value="eIF-2B_rel"/>
    <property type="match status" value="1"/>
</dbReference>
<dbReference type="NCBIfam" id="NF004326">
    <property type="entry name" value="PRK05720.1"/>
    <property type="match status" value="1"/>
</dbReference>
<dbReference type="NCBIfam" id="TIGR00512">
    <property type="entry name" value="salvage_mtnA"/>
    <property type="match status" value="1"/>
</dbReference>
<dbReference type="PANTHER" id="PTHR43475">
    <property type="entry name" value="METHYLTHIORIBOSE-1-PHOSPHATE ISOMERASE"/>
    <property type="match status" value="1"/>
</dbReference>
<dbReference type="PANTHER" id="PTHR43475:SF4">
    <property type="entry name" value="METHYLTHIORIBOSE-1-PHOSPHATE ISOMERASE"/>
    <property type="match status" value="1"/>
</dbReference>
<dbReference type="Pfam" id="PF01008">
    <property type="entry name" value="IF-2B"/>
    <property type="match status" value="1"/>
</dbReference>
<dbReference type="SUPFAM" id="SSF100950">
    <property type="entry name" value="NagB/RpiA/CoA transferase-like"/>
    <property type="match status" value="1"/>
</dbReference>